<reference key="1">
    <citation type="journal article" date="2008" name="Genome Res.">
        <title>Comparative genome analysis of Salmonella enteritidis PT4 and Salmonella gallinarum 287/91 provides insights into evolutionary and host adaptation pathways.</title>
        <authorList>
            <person name="Thomson N.R."/>
            <person name="Clayton D.J."/>
            <person name="Windhorst D."/>
            <person name="Vernikos G."/>
            <person name="Davidson S."/>
            <person name="Churcher C."/>
            <person name="Quail M.A."/>
            <person name="Stevens M."/>
            <person name="Jones M.A."/>
            <person name="Watson M."/>
            <person name="Barron A."/>
            <person name="Layton A."/>
            <person name="Pickard D."/>
            <person name="Kingsley R.A."/>
            <person name="Bignell A."/>
            <person name="Clark L."/>
            <person name="Harris B."/>
            <person name="Ormond D."/>
            <person name="Abdellah Z."/>
            <person name="Brooks K."/>
            <person name="Cherevach I."/>
            <person name="Chillingworth T."/>
            <person name="Woodward J."/>
            <person name="Norberczak H."/>
            <person name="Lord A."/>
            <person name="Arrowsmith C."/>
            <person name="Jagels K."/>
            <person name="Moule S."/>
            <person name="Mungall K."/>
            <person name="Saunders M."/>
            <person name="Whitehead S."/>
            <person name="Chabalgoity J.A."/>
            <person name="Maskell D."/>
            <person name="Humphreys T."/>
            <person name="Roberts M."/>
            <person name="Barrow P.A."/>
            <person name="Dougan G."/>
            <person name="Parkhill J."/>
        </authorList>
    </citation>
    <scope>NUCLEOTIDE SEQUENCE [LARGE SCALE GENOMIC DNA]</scope>
    <source>
        <strain>P125109</strain>
    </source>
</reference>
<gene>
    <name evidence="1" type="primary">argG</name>
    <name type="ordered locus">SEN3124</name>
</gene>
<keyword id="KW-0028">Amino-acid biosynthesis</keyword>
<keyword id="KW-0055">Arginine biosynthesis</keyword>
<keyword id="KW-0067">ATP-binding</keyword>
<keyword id="KW-0963">Cytoplasm</keyword>
<keyword id="KW-0436">Ligase</keyword>
<keyword id="KW-0547">Nucleotide-binding</keyword>
<accession>B5QZW1</accession>
<sequence>MTTILKHLPAGQRIGIAFSGGLDTSAALLWMRQKGAVPYAYTANLGQPDEDDYDAIPRRAMEYGAENARLIDCRKQLVAEGIAAIQCGAFHNTTGGLTYFNTTPLGRAVTGTMLVAAMKEDGVNIWGDGSTYKGNDIERFYRYGLLTNAELQIYKPWLDTDFIDELGGRHEMSEFMIACGFDYKMSVEKAYSTDSNMLGATHEAKDLEFLNSSVKIVNPIMGVKFWDESVKIPAEEVTVRFEQGHPVALNGKTFSDDVEMMLEANRIGGRHGLGMSDQIENRIIEAKSRGIYEAPGMALLHIAYERLLTGIHNEDTIEQYHSHGRQLGKLLYQGRWFDSQALMLRDGLQRWVASQITGEVTLELRRGNDYSILNTVSDNLTYKAERLTMEKGESVFSPDDRIGQLTMRNLDITDTREKLFGYAKAGLLTASSATGLPQVENLENKGK</sequence>
<organism>
    <name type="scientific">Salmonella enteritidis PT4 (strain P125109)</name>
    <dbReference type="NCBI Taxonomy" id="550537"/>
    <lineage>
        <taxon>Bacteria</taxon>
        <taxon>Pseudomonadati</taxon>
        <taxon>Pseudomonadota</taxon>
        <taxon>Gammaproteobacteria</taxon>
        <taxon>Enterobacterales</taxon>
        <taxon>Enterobacteriaceae</taxon>
        <taxon>Salmonella</taxon>
    </lineage>
</organism>
<proteinExistence type="inferred from homology"/>
<evidence type="ECO:0000255" key="1">
    <source>
        <dbReference type="HAMAP-Rule" id="MF_00581"/>
    </source>
</evidence>
<comment type="catalytic activity">
    <reaction evidence="1">
        <text>L-citrulline + L-aspartate + ATP = 2-(N(omega)-L-arginino)succinate + AMP + diphosphate + H(+)</text>
        <dbReference type="Rhea" id="RHEA:10932"/>
        <dbReference type="ChEBI" id="CHEBI:15378"/>
        <dbReference type="ChEBI" id="CHEBI:29991"/>
        <dbReference type="ChEBI" id="CHEBI:30616"/>
        <dbReference type="ChEBI" id="CHEBI:33019"/>
        <dbReference type="ChEBI" id="CHEBI:57472"/>
        <dbReference type="ChEBI" id="CHEBI:57743"/>
        <dbReference type="ChEBI" id="CHEBI:456215"/>
        <dbReference type="EC" id="6.3.4.5"/>
    </reaction>
</comment>
<comment type="pathway">
    <text evidence="1">Amino-acid biosynthesis; L-arginine biosynthesis; L-arginine from L-ornithine and carbamoyl phosphate: step 2/3.</text>
</comment>
<comment type="subunit">
    <text evidence="1">Homotetramer.</text>
</comment>
<comment type="subcellular location">
    <subcellularLocation>
        <location evidence="1">Cytoplasm</location>
    </subcellularLocation>
</comment>
<comment type="similarity">
    <text evidence="1">Belongs to the argininosuccinate synthase family. Type 2 subfamily.</text>
</comment>
<protein>
    <recommendedName>
        <fullName evidence="1">Argininosuccinate synthase</fullName>
        <ecNumber evidence="1">6.3.4.5</ecNumber>
    </recommendedName>
    <alternativeName>
        <fullName evidence="1">Citrulline--aspartate ligase</fullName>
    </alternativeName>
</protein>
<name>ASSY_SALEP</name>
<feature type="chain" id="PRO_1000129765" description="Argininosuccinate synthase">
    <location>
        <begin position="1"/>
        <end position="447"/>
    </location>
</feature>
<feature type="binding site" evidence="1">
    <location>
        <begin position="17"/>
        <end position="25"/>
    </location>
    <ligand>
        <name>ATP</name>
        <dbReference type="ChEBI" id="CHEBI:30616"/>
    </ligand>
</feature>
<feature type="binding site" evidence="1">
    <location>
        <position position="43"/>
    </location>
    <ligand>
        <name>ATP</name>
        <dbReference type="ChEBI" id="CHEBI:30616"/>
    </ligand>
</feature>
<feature type="binding site" evidence="1">
    <location>
        <position position="99"/>
    </location>
    <ligand>
        <name>L-citrulline</name>
        <dbReference type="ChEBI" id="CHEBI:57743"/>
    </ligand>
</feature>
<feature type="binding site" evidence="1">
    <location>
        <position position="129"/>
    </location>
    <ligand>
        <name>ATP</name>
        <dbReference type="ChEBI" id="CHEBI:30616"/>
    </ligand>
</feature>
<feature type="binding site" evidence="1">
    <location>
        <position position="131"/>
    </location>
    <ligand>
        <name>ATP</name>
        <dbReference type="ChEBI" id="CHEBI:30616"/>
    </ligand>
</feature>
<feature type="binding site" evidence="1">
    <location>
        <position position="131"/>
    </location>
    <ligand>
        <name>L-aspartate</name>
        <dbReference type="ChEBI" id="CHEBI:29991"/>
    </ligand>
</feature>
<feature type="binding site" evidence="1">
    <location>
        <position position="135"/>
    </location>
    <ligand>
        <name>L-aspartate</name>
        <dbReference type="ChEBI" id="CHEBI:29991"/>
    </ligand>
</feature>
<feature type="binding site" evidence="1">
    <location>
        <position position="135"/>
    </location>
    <ligand>
        <name>L-citrulline</name>
        <dbReference type="ChEBI" id="CHEBI:57743"/>
    </ligand>
</feature>
<feature type="binding site" evidence="1">
    <location>
        <position position="136"/>
    </location>
    <ligand>
        <name>ATP</name>
        <dbReference type="ChEBI" id="CHEBI:30616"/>
    </ligand>
</feature>
<feature type="binding site" evidence="1">
    <location>
        <position position="136"/>
    </location>
    <ligand>
        <name>L-aspartate</name>
        <dbReference type="ChEBI" id="CHEBI:29991"/>
    </ligand>
</feature>
<feature type="binding site" evidence="1">
    <location>
        <position position="139"/>
    </location>
    <ligand>
        <name>L-citrulline</name>
        <dbReference type="ChEBI" id="CHEBI:57743"/>
    </ligand>
</feature>
<feature type="binding site" evidence="1">
    <location>
        <position position="192"/>
    </location>
    <ligand>
        <name>L-citrulline</name>
        <dbReference type="ChEBI" id="CHEBI:57743"/>
    </ligand>
</feature>
<feature type="binding site" evidence="1">
    <location>
        <position position="194"/>
    </location>
    <ligand>
        <name>ATP</name>
        <dbReference type="ChEBI" id="CHEBI:30616"/>
    </ligand>
</feature>
<feature type="binding site" evidence="1">
    <location>
        <position position="201"/>
    </location>
    <ligand>
        <name>L-citrulline</name>
        <dbReference type="ChEBI" id="CHEBI:57743"/>
    </ligand>
</feature>
<feature type="binding site" evidence="1">
    <location>
        <position position="203"/>
    </location>
    <ligand>
        <name>L-citrulline</name>
        <dbReference type="ChEBI" id="CHEBI:57743"/>
    </ligand>
</feature>
<feature type="binding site" evidence="1">
    <location>
        <position position="280"/>
    </location>
    <ligand>
        <name>L-citrulline</name>
        <dbReference type="ChEBI" id="CHEBI:57743"/>
    </ligand>
</feature>
<dbReference type="EC" id="6.3.4.5" evidence="1"/>
<dbReference type="EMBL" id="AM933172">
    <property type="protein sequence ID" value="CAR34700.1"/>
    <property type="molecule type" value="Genomic_DNA"/>
</dbReference>
<dbReference type="RefSeq" id="WP_000207646.1">
    <property type="nucleotide sequence ID" value="NC_011294.1"/>
</dbReference>
<dbReference type="SMR" id="B5QZW1"/>
<dbReference type="KEGG" id="set:SEN3124"/>
<dbReference type="HOGENOM" id="CLU_032784_4_1_6"/>
<dbReference type="UniPathway" id="UPA00068">
    <property type="reaction ID" value="UER00113"/>
</dbReference>
<dbReference type="Proteomes" id="UP000000613">
    <property type="component" value="Chromosome"/>
</dbReference>
<dbReference type="GO" id="GO:0005737">
    <property type="term" value="C:cytoplasm"/>
    <property type="evidence" value="ECO:0007669"/>
    <property type="project" value="UniProtKB-SubCell"/>
</dbReference>
<dbReference type="GO" id="GO:0004055">
    <property type="term" value="F:argininosuccinate synthase activity"/>
    <property type="evidence" value="ECO:0007669"/>
    <property type="project" value="UniProtKB-UniRule"/>
</dbReference>
<dbReference type="GO" id="GO:0005524">
    <property type="term" value="F:ATP binding"/>
    <property type="evidence" value="ECO:0007669"/>
    <property type="project" value="UniProtKB-UniRule"/>
</dbReference>
<dbReference type="GO" id="GO:0042803">
    <property type="term" value="F:protein homodimerization activity"/>
    <property type="evidence" value="ECO:0007669"/>
    <property type="project" value="InterPro"/>
</dbReference>
<dbReference type="GO" id="GO:0000053">
    <property type="term" value="P:argininosuccinate metabolic process"/>
    <property type="evidence" value="ECO:0007669"/>
    <property type="project" value="TreeGrafter"/>
</dbReference>
<dbReference type="GO" id="GO:0006526">
    <property type="term" value="P:L-arginine biosynthetic process"/>
    <property type="evidence" value="ECO:0007669"/>
    <property type="project" value="UniProtKB-UniRule"/>
</dbReference>
<dbReference type="GO" id="GO:0000050">
    <property type="term" value="P:urea cycle"/>
    <property type="evidence" value="ECO:0007669"/>
    <property type="project" value="TreeGrafter"/>
</dbReference>
<dbReference type="CDD" id="cd01999">
    <property type="entry name" value="ASS"/>
    <property type="match status" value="1"/>
</dbReference>
<dbReference type="FunFam" id="1.10.287.400:FF:000001">
    <property type="entry name" value="Argininosuccinate synthase"/>
    <property type="match status" value="1"/>
</dbReference>
<dbReference type="Gene3D" id="1.10.287.400">
    <property type="match status" value="1"/>
</dbReference>
<dbReference type="Gene3D" id="3.90.1260.10">
    <property type="entry name" value="Argininosuccinate synthetase, chain A, domain 2"/>
    <property type="match status" value="1"/>
</dbReference>
<dbReference type="Gene3D" id="3.40.50.620">
    <property type="entry name" value="HUPs"/>
    <property type="match status" value="1"/>
</dbReference>
<dbReference type="HAMAP" id="MF_00581">
    <property type="entry name" value="Arg_succ_synth_type2"/>
    <property type="match status" value="1"/>
</dbReference>
<dbReference type="InterPro" id="IPR023437">
    <property type="entry name" value="Arg_succ_synth_type2_subfam"/>
</dbReference>
<dbReference type="InterPro" id="IPR048268">
    <property type="entry name" value="Arginosuc_syn_C"/>
</dbReference>
<dbReference type="InterPro" id="IPR048267">
    <property type="entry name" value="Arginosuc_syn_N"/>
</dbReference>
<dbReference type="InterPro" id="IPR001518">
    <property type="entry name" value="Arginosuc_synth"/>
</dbReference>
<dbReference type="InterPro" id="IPR018223">
    <property type="entry name" value="Arginosuc_synth_CS"/>
</dbReference>
<dbReference type="InterPro" id="IPR023434">
    <property type="entry name" value="Arginosuc_synth_type_1_subfam"/>
</dbReference>
<dbReference type="InterPro" id="IPR024074">
    <property type="entry name" value="AS_cat/multimer_dom_body"/>
</dbReference>
<dbReference type="InterPro" id="IPR024073">
    <property type="entry name" value="AS_multimer_C_tail"/>
</dbReference>
<dbReference type="InterPro" id="IPR014729">
    <property type="entry name" value="Rossmann-like_a/b/a_fold"/>
</dbReference>
<dbReference type="NCBIfam" id="TIGR00032">
    <property type="entry name" value="argG"/>
    <property type="match status" value="1"/>
</dbReference>
<dbReference type="NCBIfam" id="NF003779">
    <property type="entry name" value="PRK05370.1"/>
    <property type="match status" value="1"/>
</dbReference>
<dbReference type="PANTHER" id="PTHR11587">
    <property type="entry name" value="ARGININOSUCCINATE SYNTHASE"/>
    <property type="match status" value="1"/>
</dbReference>
<dbReference type="PANTHER" id="PTHR11587:SF2">
    <property type="entry name" value="ARGININOSUCCINATE SYNTHASE"/>
    <property type="match status" value="1"/>
</dbReference>
<dbReference type="Pfam" id="PF20979">
    <property type="entry name" value="Arginosuc_syn_C"/>
    <property type="match status" value="1"/>
</dbReference>
<dbReference type="Pfam" id="PF00764">
    <property type="entry name" value="Arginosuc_synth"/>
    <property type="match status" value="1"/>
</dbReference>
<dbReference type="SUPFAM" id="SSF52402">
    <property type="entry name" value="Adenine nucleotide alpha hydrolases-like"/>
    <property type="match status" value="1"/>
</dbReference>
<dbReference type="SUPFAM" id="SSF69864">
    <property type="entry name" value="Argininosuccinate synthetase, C-terminal domain"/>
    <property type="match status" value="1"/>
</dbReference>
<dbReference type="PROSITE" id="PS00564">
    <property type="entry name" value="ARGININOSUCCIN_SYN_1"/>
    <property type="match status" value="1"/>
</dbReference>
<dbReference type="PROSITE" id="PS00565">
    <property type="entry name" value="ARGININOSUCCIN_SYN_2"/>
    <property type="match status" value="1"/>
</dbReference>